<name>FCF1_MOUSE</name>
<organism>
    <name type="scientific">Mus musculus</name>
    <name type="common">Mouse</name>
    <dbReference type="NCBI Taxonomy" id="10090"/>
    <lineage>
        <taxon>Eukaryota</taxon>
        <taxon>Metazoa</taxon>
        <taxon>Chordata</taxon>
        <taxon>Craniata</taxon>
        <taxon>Vertebrata</taxon>
        <taxon>Euteleostomi</taxon>
        <taxon>Mammalia</taxon>
        <taxon>Eutheria</taxon>
        <taxon>Euarchontoglires</taxon>
        <taxon>Glires</taxon>
        <taxon>Rodentia</taxon>
        <taxon>Myomorpha</taxon>
        <taxon>Muroidea</taxon>
        <taxon>Muridae</taxon>
        <taxon>Murinae</taxon>
        <taxon>Mus</taxon>
        <taxon>Mus</taxon>
    </lineage>
</organism>
<sequence>MGKQKKTRKYATMKRMLSLRDERLKEKDRLKPKKKEKKDPSALKEREVPQHPSCLFFQYNTQLGPPYHILVDTNFINFSIKAKLDLVQSMMDCLYAKCIPCITDCVMAEIEKLGQKFRVALRIAKDPRFDRLPCTHKGTYADDCLVQRVTQHKCYIVATVDRDLKRRIRKIPGVPIMYLSNHRYNIERMPDDYGAPRF</sequence>
<keyword id="KW-0539">Nucleus</keyword>
<keyword id="KW-1185">Reference proteome</keyword>
<keyword id="KW-0690">Ribosome biogenesis</keyword>
<keyword id="KW-0698">rRNA processing</keyword>
<reference key="1">
    <citation type="journal article" date="2004" name="Genome Res.">
        <title>The status, quality, and expansion of the NIH full-length cDNA project: the Mammalian Gene Collection (MGC).</title>
        <authorList>
            <consortium name="The MGC Project Team"/>
        </authorList>
    </citation>
    <scope>NUCLEOTIDE SEQUENCE [LARGE SCALE MRNA]</scope>
    <source>
        <strain>C57BL/6J</strain>
        <tissue>Mammary gland</tissue>
    </source>
</reference>
<reference key="2">
    <citation type="journal article" date="2005" name="Science">
        <title>The transcriptional landscape of the mammalian genome.</title>
        <authorList>
            <person name="Carninci P."/>
            <person name="Kasukawa T."/>
            <person name="Katayama S."/>
            <person name="Gough J."/>
            <person name="Frith M.C."/>
            <person name="Maeda N."/>
            <person name="Oyama R."/>
            <person name="Ravasi T."/>
            <person name="Lenhard B."/>
            <person name="Wells C."/>
            <person name="Kodzius R."/>
            <person name="Shimokawa K."/>
            <person name="Bajic V.B."/>
            <person name="Brenner S.E."/>
            <person name="Batalov S."/>
            <person name="Forrest A.R."/>
            <person name="Zavolan M."/>
            <person name="Davis M.J."/>
            <person name="Wilming L.G."/>
            <person name="Aidinis V."/>
            <person name="Allen J.E."/>
            <person name="Ambesi-Impiombato A."/>
            <person name="Apweiler R."/>
            <person name="Aturaliya R.N."/>
            <person name="Bailey T.L."/>
            <person name="Bansal M."/>
            <person name="Baxter L."/>
            <person name="Beisel K.W."/>
            <person name="Bersano T."/>
            <person name="Bono H."/>
            <person name="Chalk A.M."/>
            <person name="Chiu K.P."/>
            <person name="Choudhary V."/>
            <person name="Christoffels A."/>
            <person name="Clutterbuck D.R."/>
            <person name="Crowe M.L."/>
            <person name="Dalla E."/>
            <person name="Dalrymple B.P."/>
            <person name="de Bono B."/>
            <person name="Della Gatta G."/>
            <person name="di Bernardo D."/>
            <person name="Down T."/>
            <person name="Engstrom P."/>
            <person name="Fagiolini M."/>
            <person name="Faulkner G."/>
            <person name="Fletcher C.F."/>
            <person name="Fukushima T."/>
            <person name="Furuno M."/>
            <person name="Futaki S."/>
            <person name="Gariboldi M."/>
            <person name="Georgii-Hemming P."/>
            <person name="Gingeras T.R."/>
            <person name="Gojobori T."/>
            <person name="Green R.E."/>
            <person name="Gustincich S."/>
            <person name="Harbers M."/>
            <person name="Hayashi Y."/>
            <person name="Hensch T.K."/>
            <person name="Hirokawa N."/>
            <person name="Hill D."/>
            <person name="Huminiecki L."/>
            <person name="Iacono M."/>
            <person name="Ikeo K."/>
            <person name="Iwama A."/>
            <person name="Ishikawa T."/>
            <person name="Jakt M."/>
            <person name="Kanapin A."/>
            <person name="Katoh M."/>
            <person name="Kawasawa Y."/>
            <person name="Kelso J."/>
            <person name="Kitamura H."/>
            <person name="Kitano H."/>
            <person name="Kollias G."/>
            <person name="Krishnan S.P."/>
            <person name="Kruger A."/>
            <person name="Kummerfeld S.K."/>
            <person name="Kurochkin I.V."/>
            <person name="Lareau L.F."/>
            <person name="Lazarevic D."/>
            <person name="Lipovich L."/>
            <person name="Liu J."/>
            <person name="Liuni S."/>
            <person name="McWilliam S."/>
            <person name="Madan Babu M."/>
            <person name="Madera M."/>
            <person name="Marchionni L."/>
            <person name="Matsuda H."/>
            <person name="Matsuzawa S."/>
            <person name="Miki H."/>
            <person name="Mignone F."/>
            <person name="Miyake S."/>
            <person name="Morris K."/>
            <person name="Mottagui-Tabar S."/>
            <person name="Mulder N."/>
            <person name="Nakano N."/>
            <person name="Nakauchi H."/>
            <person name="Ng P."/>
            <person name="Nilsson R."/>
            <person name="Nishiguchi S."/>
            <person name="Nishikawa S."/>
            <person name="Nori F."/>
            <person name="Ohara O."/>
            <person name="Okazaki Y."/>
            <person name="Orlando V."/>
            <person name="Pang K.C."/>
            <person name="Pavan W.J."/>
            <person name="Pavesi G."/>
            <person name="Pesole G."/>
            <person name="Petrovsky N."/>
            <person name="Piazza S."/>
            <person name="Reed J."/>
            <person name="Reid J.F."/>
            <person name="Ring B.Z."/>
            <person name="Ringwald M."/>
            <person name="Rost B."/>
            <person name="Ruan Y."/>
            <person name="Salzberg S.L."/>
            <person name="Sandelin A."/>
            <person name="Schneider C."/>
            <person name="Schoenbach C."/>
            <person name="Sekiguchi K."/>
            <person name="Semple C.A."/>
            <person name="Seno S."/>
            <person name="Sessa L."/>
            <person name="Sheng Y."/>
            <person name="Shibata Y."/>
            <person name="Shimada H."/>
            <person name="Shimada K."/>
            <person name="Silva D."/>
            <person name="Sinclair B."/>
            <person name="Sperling S."/>
            <person name="Stupka E."/>
            <person name="Sugiura K."/>
            <person name="Sultana R."/>
            <person name="Takenaka Y."/>
            <person name="Taki K."/>
            <person name="Tammoja K."/>
            <person name="Tan S.L."/>
            <person name="Tang S."/>
            <person name="Taylor M.S."/>
            <person name="Tegner J."/>
            <person name="Teichmann S.A."/>
            <person name="Ueda H.R."/>
            <person name="van Nimwegen E."/>
            <person name="Verardo R."/>
            <person name="Wei C.L."/>
            <person name="Yagi K."/>
            <person name="Yamanishi H."/>
            <person name="Zabarovsky E."/>
            <person name="Zhu S."/>
            <person name="Zimmer A."/>
            <person name="Hide W."/>
            <person name="Bult C."/>
            <person name="Grimmond S.M."/>
            <person name="Teasdale R.D."/>
            <person name="Liu E.T."/>
            <person name="Brusic V."/>
            <person name="Quackenbush J."/>
            <person name="Wahlestedt C."/>
            <person name="Mattick J.S."/>
            <person name="Hume D.A."/>
            <person name="Kai C."/>
            <person name="Sasaki D."/>
            <person name="Tomaru Y."/>
            <person name="Fukuda S."/>
            <person name="Kanamori-Katayama M."/>
            <person name="Suzuki M."/>
            <person name="Aoki J."/>
            <person name="Arakawa T."/>
            <person name="Iida J."/>
            <person name="Imamura K."/>
            <person name="Itoh M."/>
            <person name="Kato T."/>
            <person name="Kawaji H."/>
            <person name="Kawagashira N."/>
            <person name="Kawashima T."/>
            <person name="Kojima M."/>
            <person name="Kondo S."/>
            <person name="Konno H."/>
            <person name="Nakano K."/>
            <person name="Ninomiya N."/>
            <person name="Nishio T."/>
            <person name="Okada M."/>
            <person name="Plessy C."/>
            <person name="Shibata K."/>
            <person name="Shiraki T."/>
            <person name="Suzuki S."/>
            <person name="Tagami M."/>
            <person name="Waki K."/>
            <person name="Watahiki A."/>
            <person name="Okamura-Oho Y."/>
            <person name="Suzuki H."/>
            <person name="Kawai J."/>
            <person name="Hayashizaki Y."/>
        </authorList>
    </citation>
    <scope>NUCLEOTIDE SEQUENCE [LARGE SCALE MRNA] OF 4-198</scope>
    <source>
        <strain>C57BL/6J</strain>
        <tissue>Embryo</tissue>
    </source>
</reference>
<accession>Q9CTH6</accession>
<accession>Q505C6</accession>
<accession>Q8K261</accession>
<comment type="function">
    <text evidence="1">Part of the small subunit (SSU) processome, first precursor of the small eukaryotic ribosomal subunit. During the assembly of the SSU processome in the nucleolus, many ribosome biogenesis factors, an RNA chaperone and ribosomal proteins associate with the nascent pre-rRNA and work in concert to generate RNA folding, modifications, rearrangements and cleavage as well as targeted degradation of pre-ribosomal RNA by the RNA exosome.</text>
</comment>
<comment type="subunit">
    <text evidence="1">Part of the small subunit (SSU) processome, composed of more than 70 proteins and the RNA chaperone small nucleolar RNA (snoRNA) U3.</text>
</comment>
<comment type="subcellular location">
    <subcellularLocation>
        <location evidence="1">Nucleus</location>
        <location evidence="1">Nucleolus</location>
    </subcellularLocation>
</comment>
<comment type="similarity">
    <text evidence="3">Belongs to the UTP23/FCF1 family. FCF1 subfamily.</text>
</comment>
<comment type="sequence caution" evidence="3">
    <conflict type="erroneous termination">
        <sequence resource="EMBL-CDS" id="AAH33045"/>
    </conflict>
    <text>Truncated C-terminus.</text>
</comment>
<dbReference type="EMBL" id="BC033045">
    <property type="protein sequence ID" value="AAH33045.1"/>
    <property type="status" value="ALT_TERM"/>
    <property type="molecule type" value="mRNA"/>
</dbReference>
<dbReference type="EMBL" id="BC094619">
    <property type="status" value="NOT_ANNOTATED_CDS"/>
    <property type="molecule type" value="mRNA"/>
</dbReference>
<dbReference type="EMBL" id="AK003561">
    <property type="protein sequence ID" value="BAB22857.1"/>
    <property type="molecule type" value="mRNA"/>
</dbReference>
<dbReference type="CCDS" id="CCDS49113.1"/>
<dbReference type="RefSeq" id="NP_082908.2">
    <property type="nucleotide sequence ID" value="NM_028632.2"/>
</dbReference>
<dbReference type="SMR" id="Q9CTH6"/>
<dbReference type="BioGRID" id="216221">
    <property type="interactions" value="1"/>
</dbReference>
<dbReference type="FunCoup" id="Q9CTH6">
    <property type="interactions" value="3061"/>
</dbReference>
<dbReference type="STRING" id="10090.ENSMUSP00000021669"/>
<dbReference type="PhosphoSitePlus" id="Q9CTH6"/>
<dbReference type="PaxDb" id="10090-ENSMUSP00000021669"/>
<dbReference type="ProteomicsDB" id="271888"/>
<dbReference type="Pumba" id="Q9CTH6"/>
<dbReference type="DNASU" id="73736"/>
<dbReference type="Ensembl" id="ENSMUST00000021669.15">
    <property type="protein sequence ID" value="ENSMUSP00000021669.9"/>
    <property type="gene ID" value="ENSMUSG00000021243.15"/>
</dbReference>
<dbReference type="GeneID" id="73736"/>
<dbReference type="KEGG" id="mmu:73736"/>
<dbReference type="UCSC" id="uc007ogc.2">
    <property type="organism name" value="mouse"/>
</dbReference>
<dbReference type="AGR" id="MGI:1920986"/>
<dbReference type="CTD" id="51077"/>
<dbReference type="MGI" id="MGI:1920986">
    <property type="gene designation" value="Fcf1"/>
</dbReference>
<dbReference type="VEuPathDB" id="HostDB:ENSMUSG00000021243"/>
<dbReference type="eggNOG" id="KOG3165">
    <property type="taxonomic scope" value="Eukaryota"/>
</dbReference>
<dbReference type="GeneTree" id="ENSGT00940000153117"/>
<dbReference type="InParanoid" id="Q9CTH6"/>
<dbReference type="OMA" id="GMMDCLL"/>
<dbReference type="OrthoDB" id="76105at2759"/>
<dbReference type="PhylomeDB" id="Q9CTH6"/>
<dbReference type="TreeFam" id="TF314992"/>
<dbReference type="Reactome" id="R-MMU-6791226">
    <property type="pathway name" value="Major pathway of rRNA processing in the nucleolus and cytosol"/>
</dbReference>
<dbReference type="BioGRID-ORCS" id="73736">
    <property type="hits" value="28 hits in 78 CRISPR screens"/>
</dbReference>
<dbReference type="ChiTaRS" id="Fcf1">
    <property type="organism name" value="mouse"/>
</dbReference>
<dbReference type="PRO" id="PR:Q9CTH6"/>
<dbReference type="Proteomes" id="UP000000589">
    <property type="component" value="Chromosome 12"/>
</dbReference>
<dbReference type="RNAct" id="Q9CTH6">
    <property type="molecule type" value="protein"/>
</dbReference>
<dbReference type="Bgee" id="ENSMUSG00000021243">
    <property type="expression patterns" value="Expressed in primary oocyte and 69 other cell types or tissues"/>
</dbReference>
<dbReference type="ExpressionAtlas" id="Q9CTH6">
    <property type="expression patterns" value="baseline and differential"/>
</dbReference>
<dbReference type="GO" id="GO:0005730">
    <property type="term" value="C:nucleolus"/>
    <property type="evidence" value="ECO:0007669"/>
    <property type="project" value="UniProtKB-SubCell"/>
</dbReference>
<dbReference type="GO" id="GO:0032040">
    <property type="term" value="C:small-subunit processome"/>
    <property type="evidence" value="ECO:0000250"/>
    <property type="project" value="UniProtKB"/>
</dbReference>
<dbReference type="GO" id="GO:0000480">
    <property type="term" value="P:endonucleolytic cleavage in 5'-ETS of tricistronic rRNA transcript (SSU-rRNA, 5.8S rRNA, LSU-rRNA)"/>
    <property type="evidence" value="ECO:0000315"/>
    <property type="project" value="MGI"/>
</dbReference>
<dbReference type="GO" id="GO:0000447">
    <property type="term" value="P:endonucleolytic cleavage in ITS1 to separate SSU-rRNA from 5.8S rRNA and LSU-rRNA from tricistronic rRNA transcript (SSU-rRNA, 5.8S rRNA, LSU-rRNA)"/>
    <property type="evidence" value="ECO:0000315"/>
    <property type="project" value="MGI"/>
</dbReference>
<dbReference type="GO" id="GO:0042274">
    <property type="term" value="P:ribosomal small subunit biogenesis"/>
    <property type="evidence" value="ECO:0000250"/>
    <property type="project" value="UniProtKB"/>
</dbReference>
<dbReference type="CDD" id="cd09864">
    <property type="entry name" value="PIN_Fcf1-like"/>
    <property type="match status" value="1"/>
</dbReference>
<dbReference type="FunFam" id="3.40.50.1010:FF:000004">
    <property type="entry name" value="rRNA-processing protein FCF1 homolog"/>
    <property type="match status" value="1"/>
</dbReference>
<dbReference type="Gene3D" id="3.40.50.1010">
    <property type="entry name" value="5'-nuclease"/>
    <property type="match status" value="1"/>
</dbReference>
<dbReference type="InterPro" id="IPR006984">
    <property type="entry name" value="Fcf1/Utp23"/>
</dbReference>
<dbReference type="InterPro" id="IPR037503">
    <property type="entry name" value="Fcf1_PIN"/>
</dbReference>
<dbReference type="InterPro" id="IPR029060">
    <property type="entry name" value="PIN-like_dom_sf"/>
</dbReference>
<dbReference type="InterPro" id="IPR002716">
    <property type="entry name" value="PIN_dom"/>
</dbReference>
<dbReference type="PANTHER" id="PTHR12416">
    <property type="entry name" value="RRNA-PROCESSING PROTEIN UTP23 HOMOLOG"/>
    <property type="match status" value="1"/>
</dbReference>
<dbReference type="Pfam" id="PF04900">
    <property type="entry name" value="Fcf1"/>
    <property type="match status" value="1"/>
</dbReference>
<dbReference type="SMART" id="SM00670">
    <property type="entry name" value="PINc"/>
    <property type="match status" value="1"/>
</dbReference>
<dbReference type="SUPFAM" id="SSF88723">
    <property type="entry name" value="PIN domain-like"/>
    <property type="match status" value="1"/>
</dbReference>
<proteinExistence type="evidence at transcript level"/>
<protein>
    <recommendedName>
        <fullName>rRNA-processing protein FCF1 homolog</fullName>
    </recommendedName>
</protein>
<evidence type="ECO:0000250" key="1">
    <source>
        <dbReference type="UniProtKB" id="Q9Y324"/>
    </source>
</evidence>
<evidence type="ECO:0000256" key="2">
    <source>
        <dbReference type="SAM" id="MobiDB-lite"/>
    </source>
</evidence>
<evidence type="ECO:0000305" key="3"/>
<feature type="chain" id="PRO_0000089921" description="rRNA-processing protein FCF1 homolog">
    <location>
        <begin position="1"/>
        <end position="198"/>
    </location>
</feature>
<feature type="domain" description="PINc">
    <location>
        <begin position="67"/>
        <end position="166"/>
    </location>
</feature>
<feature type="region of interest" description="Disordered" evidence="2">
    <location>
        <begin position="22"/>
        <end position="47"/>
    </location>
</feature>
<feature type="compositionally biased region" description="Basic and acidic residues" evidence="2">
    <location>
        <begin position="37"/>
        <end position="47"/>
    </location>
</feature>
<gene>
    <name type="primary">Fcf1</name>
</gene>